<protein>
    <recommendedName>
        <fullName evidence="2">Hypoxia responsive morphology factor A</fullName>
    </recommendedName>
    <alternativeName>
        <fullName evidence="2">Subtelomeric hrmA-associated cluster protein hrmA</fullName>
    </alternativeName>
</protein>
<proteinExistence type="evidence at protein level"/>
<keyword id="KW-0130">Cell adhesion</keyword>
<keyword id="KW-0539">Nucleus</keyword>
<keyword id="KW-1185">Reference proteome</keyword>
<keyword id="KW-0843">Virulence</keyword>
<feature type="chain" id="PRO_0000460411" description="Hypoxia responsive morphology factor A">
    <location>
        <begin position="1"/>
        <end position="292"/>
    </location>
</feature>
<feature type="region of interest" description="RNA recognition motif (RRM)-like domain" evidence="1">
    <location>
        <begin position="156"/>
        <end position="186"/>
    </location>
</feature>
<feature type="short sequence motif" description="Bipartite nuclear localization signal" evidence="1">
    <location>
        <begin position="48"/>
        <end position="70"/>
    </location>
</feature>
<feature type="mutagenesis site" description="Impairs the induction of expression of cgnA." evidence="1">
    <original>F</original>
    <variation>A</variation>
    <location>
        <position position="174"/>
    </location>
</feature>
<feature type="mutagenesis site" description="Impairs the induction of expression of cgnA." evidence="1">
    <original>F</original>
    <variation>A</variation>
    <location>
        <position position="179"/>
    </location>
</feature>
<sequence>MASTKPASSLIYQAWNKLSINQTIPSDSLELLGERLAIAFAPKLKEQRRNGRRRNLEYVAQHRRKIARKIYLEILEKDPNIFLPFILAVSPRACLSFDISSFLEQHQSQGRHFLRNNAEAILWGLAKKHDIDGSLHFRKLMREIFQLSPPATEAEGKEHYSLHLSTLPAIRNAFGDVIFDAIERSPTQVTARAKGYFSEKTESVWTKVPYRSSQDAIISLEVGSAIELANVLFPIATQKIVSILSACSPTVRQKNFSEAILGPDPQDTPATSSEIGMKFKVHMTAVANSTLC</sequence>
<gene>
    <name evidence="2" type="primary">hrmA</name>
    <name type="ORF">AFUA_5G14900</name>
</gene>
<evidence type="ECO:0000269" key="1">
    <source>
    </source>
</evidence>
<evidence type="ECO:0000303" key="2">
    <source>
    </source>
</evidence>
<evidence type="ECO:0000305" key="3"/>
<dbReference type="EMBL" id="AAHF01000003">
    <property type="protein sequence ID" value="EAL91129.1"/>
    <property type="molecule type" value="Genomic_DNA"/>
</dbReference>
<dbReference type="RefSeq" id="XP_753167.1">
    <property type="nucleotide sequence ID" value="XM_748074.1"/>
</dbReference>
<dbReference type="EnsemblFungi" id="EAL91129">
    <property type="protein sequence ID" value="EAL91129"/>
    <property type="gene ID" value="AFUA_5G14900"/>
</dbReference>
<dbReference type="GeneID" id="3510950"/>
<dbReference type="KEGG" id="afm:AFUA_5G14900"/>
<dbReference type="eggNOG" id="ENOG502T6FZ">
    <property type="taxonomic scope" value="Eukaryota"/>
</dbReference>
<dbReference type="HOGENOM" id="CLU_983876_0_0_1"/>
<dbReference type="InParanoid" id="Q4WW97"/>
<dbReference type="OMA" id="FCETHIE"/>
<dbReference type="OrthoDB" id="4425826at2759"/>
<dbReference type="Proteomes" id="UP000002530">
    <property type="component" value="Chromosome 5"/>
</dbReference>
<dbReference type="GO" id="GO:0005634">
    <property type="term" value="C:nucleus"/>
    <property type="evidence" value="ECO:0007669"/>
    <property type="project" value="UniProtKB-SubCell"/>
</dbReference>
<dbReference type="GO" id="GO:0007155">
    <property type="term" value="P:cell adhesion"/>
    <property type="evidence" value="ECO:0007669"/>
    <property type="project" value="UniProtKB-KW"/>
</dbReference>
<accession>Q4WW97</accession>
<comment type="function">
    <text evidence="1">Hypoxia responsive morphology factor that modulates the expression of the subtelomeric hrmA-associated cluster (HAC) containing genes that alter the hyphal surface (such as reduced total chitin or increased beta-glucan exposure) and perturb inter-hyphal interactions within the developing biofilms, resulting in a loss of vertically aligned polarized growing filaments (PubMed:31548684). Consequently, this hypoxia-typic morphotype (called H-MORPH) with altered biofilm architecture leads to increased hypoxia fitness, increased host inflammation, rapid disease progression, and mortality in a murine model of invasive aspergillosis (PubMed:31548684).</text>
</comment>
<comment type="subcellular location">
    <subcellularLocation>
        <location evidence="1">Nucleus</location>
    </subcellularLocation>
</comment>
<comment type="induction">
    <text evidence="1">Expression is induced during murine pulmonary aspergillosis.</text>
</comment>
<comment type="domain">
    <text evidence="1">The N-terminal bipartite nuclear localization signalis required for nuclear localization and generation of the H-MORPH morphotype.</text>
</comment>
<comment type="domain">
    <text evidence="1">The RNA recognition motif (RRM)-like domain is not required for nuclear localization but is necessary for induction of the expression of the HAC cluster genes such as cgnA.</text>
</comment>
<comment type="disruption phenotype">
    <text evidence="1">Impairs the formation of the hypoxia-typic morphotype and restores classical biofilm architecture.</text>
</comment>
<comment type="similarity">
    <text evidence="3">Belongs to the hrmA family.</text>
</comment>
<reference key="1">
    <citation type="journal article" date="2005" name="Nature">
        <title>Genomic sequence of the pathogenic and allergenic filamentous fungus Aspergillus fumigatus.</title>
        <authorList>
            <person name="Nierman W.C."/>
            <person name="Pain A."/>
            <person name="Anderson M.J."/>
            <person name="Wortman J.R."/>
            <person name="Kim H.S."/>
            <person name="Arroyo J."/>
            <person name="Berriman M."/>
            <person name="Abe K."/>
            <person name="Archer D.B."/>
            <person name="Bermejo C."/>
            <person name="Bennett J.W."/>
            <person name="Bowyer P."/>
            <person name="Chen D."/>
            <person name="Collins M."/>
            <person name="Coulsen R."/>
            <person name="Davies R."/>
            <person name="Dyer P.S."/>
            <person name="Farman M.L."/>
            <person name="Fedorova N."/>
            <person name="Fedorova N.D."/>
            <person name="Feldblyum T.V."/>
            <person name="Fischer R."/>
            <person name="Fosker N."/>
            <person name="Fraser A."/>
            <person name="Garcia J.L."/>
            <person name="Garcia M.J."/>
            <person name="Goble A."/>
            <person name="Goldman G.H."/>
            <person name="Gomi K."/>
            <person name="Griffith-Jones S."/>
            <person name="Gwilliam R."/>
            <person name="Haas B.J."/>
            <person name="Haas H."/>
            <person name="Harris D.E."/>
            <person name="Horiuchi H."/>
            <person name="Huang J."/>
            <person name="Humphray S."/>
            <person name="Jimenez J."/>
            <person name="Keller N."/>
            <person name="Khouri H."/>
            <person name="Kitamoto K."/>
            <person name="Kobayashi T."/>
            <person name="Konzack S."/>
            <person name="Kulkarni R."/>
            <person name="Kumagai T."/>
            <person name="Lafton A."/>
            <person name="Latge J.-P."/>
            <person name="Li W."/>
            <person name="Lord A."/>
            <person name="Lu C."/>
            <person name="Majoros W.H."/>
            <person name="May G.S."/>
            <person name="Miller B.L."/>
            <person name="Mohamoud Y."/>
            <person name="Molina M."/>
            <person name="Monod M."/>
            <person name="Mouyna I."/>
            <person name="Mulligan S."/>
            <person name="Murphy L.D."/>
            <person name="O'Neil S."/>
            <person name="Paulsen I."/>
            <person name="Penalva M.A."/>
            <person name="Pertea M."/>
            <person name="Price C."/>
            <person name="Pritchard B.L."/>
            <person name="Quail M.A."/>
            <person name="Rabbinowitsch E."/>
            <person name="Rawlins N."/>
            <person name="Rajandream M.A."/>
            <person name="Reichard U."/>
            <person name="Renauld H."/>
            <person name="Robson G.D."/>
            <person name="Rodriguez de Cordoba S."/>
            <person name="Rodriguez-Pena J.M."/>
            <person name="Ronning C.M."/>
            <person name="Rutter S."/>
            <person name="Salzberg S.L."/>
            <person name="Sanchez M."/>
            <person name="Sanchez-Ferrero J.C."/>
            <person name="Saunders D."/>
            <person name="Seeger K."/>
            <person name="Squares R."/>
            <person name="Squares S."/>
            <person name="Takeuchi M."/>
            <person name="Tekaia F."/>
            <person name="Turner G."/>
            <person name="Vazquez de Aldana C.R."/>
            <person name="Weidman J."/>
            <person name="White O."/>
            <person name="Woodward J.R."/>
            <person name="Yu J.-H."/>
            <person name="Fraser C.M."/>
            <person name="Galagan J.E."/>
            <person name="Asai K."/>
            <person name="Machida M."/>
            <person name="Hall N."/>
            <person name="Barrell B.G."/>
            <person name="Denning D.W."/>
        </authorList>
    </citation>
    <scope>NUCLEOTIDE SEQUENCE [LARGE SCALE GENOMIC DNA]</scope>
    <source>
        <strain>ATCC MYA-4609 / CBS 101355 / FGSC A1100 / Af293</strain>
    </source>
</reference>
<reference key="2">
    <citation type="journal article" date="2019" name="Nat. Microbiol.">
        <title>Fungal biofilm morphology impacts hypoxia fitness and disease progression.</title>
        <authorList>
            <person name="Kowalski C.H."/>
            <person name="Kerkaert J.D."/>
            <person name="Liu K.W."/>
            <person name="Bond M.C."/>
            <person name="Hartmann R."/>
            <person name="Nadell C.D."/>
            <person name="Stajich J.E."/>
            <person name="Cramer R.A."/>
        </authorList>
    </citation>
    <scope>FUNCTION</scope>
    <scope>MUTAGENESIS OF PHE-174; PHE-179 AND ASP-304</scope>
    <scope>DISRUPTION PHENOTYPE</scope>
    <scope>INDUCTION</scope>
    <scope>SUBCELLULAR LOCATION</scope>
    <scope>DOMAIN</scope>
</reference>
<organism>
    <name type="scientific">Aspergillus fumigatus (strain ATCC MYA-4609 / CBS 101355 / FGSC A1100 / Af293)</name>
    <name type="common">Neosartorya fumigata</name>
    <dbReference type="NCBI Taxonomy" id="330879"/>
    <lineage>
        <taxon>Eukaryota</taxon>
        <taxon>Fungi</taxon>
        <taxon>Dikarya</taxon>
        <taxon>Ascomycota</taxon>
        <taxon>Pezizomycotina</taxon>
        <taxon>Eurotiomycetes</taxon>
        <taxon>Eurotiomycetidae</taxon>
        <taxon>Eurotiales</taxon>
        <taxon>Aspergillaceae</taxon>
        <taxon>Aspergillus</taxon>
        <taxon>Aspergillus subgen. Fumigati</taxon>
    </lineage>
</organism>
<name>HRMA_ASPFU</name>